<comment type="function">
    <text evidence="2 11 12 13">May have an important role in maintaining nuclear envelope structure by organizing protein complexes at the inner nuclear membrane. Required for retaining emerin at the inner nuclear membrane (By similarity). Plays a role in the modulation of innate immune signaling through the cGAS-STING pathway by interacting with RNF26 (PubMed:32614325). In addition, functions as a critical signaling component in mediating NF-kappa-B activation by acting downstream of EGFR and upstream of CARD10 (PubMed:27991920). Contributes to passive conductance current in cochlear glia-like supporting cells, mediated by gap junctions and necessary for hearing and speech discrimination (PubMed:34050020).</text>
</comment>
<comment type="subunit">
    <text evidence="1 9 11 12 13">Can form oligomers through the transmembrane domains. Interacts with EMD; the interaction retains EMD at the inner nuclear membrane. Interacts with LMNA and LMNB2 (By similarity). Interacts with SUN2. Interacts with RNF26; this interaction is important to modulate innate immune signaling through the cGAS-STING pathway (PubMed:32614325). Interacts with CARD10 (PubMed:27991920). Interacts with gap junctions proteins GJB2/Cx26 and GJB4/Cx30 (PubMed:34050020).</text>
</comment>
<comment type="interaction">
    <interactant intactId="EBI-721293">
        <id>Q9BTV4</id>
    </interactant>
    <interactant intactId="EBI-3936819">
        <id>Q6Q788</id>
        <label>APOA5</label>
    </interactant>
    <organismsDiffer>false</organismsDiffer>
    <experiments>3</experiments>
</comment>
<comment type="interaction">
    <interactant intactId="EBI-721293">
        <id>Q9BTV4</id>
    </interactant>
    <interactant intactId="EBI-11343438">
        <id>Q3SXY8</id>
        <label>ARL13B</label>
    </interactant>
    <organismsDiffer>false</organismsDiffer>
    <experiments>3</experiments>
</comment>
<comment type="interaction">
    <interactant intactId="EBI-721293">
        <id>Q9BTV4</id>
    </interactant>
    <interactant intactId="EBI-1045797">
        <id>Q8N5K1</id>
        <label>CISD2</label>
    </interactant>
    <organismsDiffer>false</organismsDiffer>
    <experiments>3</experiments>
</comment>
<comment type="interaction">
    <interactant intactId="EBI-721293">
        <id>Q9BTV4</id>
    </interactant>
    <interactant intactId="EBI-489887">
        <id>P50402</id>
        <label>EMD</label>
    </interactant>
    <organismsDiffer>false</organismsDiffer>
    <experiments>5</experiments>
</comment>
<comment type="interaction">
    <interactant intactId="EBI-721293">
        <id>Q9BTV4</id>
    </interactant>
    <interactant intactId="EBI-18304435">
        <id>Q5JX71</id>
        <label>FAM209A</label>
    </interactant>
    <organismsDiffer>false</organismsDiffer>
    <experiments>3</experiments>
</comment>
<comment type="interaction">
    <interactant intactId="EBI-721293">
        <id>Q9BTV4</id>
    </interactant>
    <interactant intactId="EBI-9640259">
        <id>P02671-2</id>
        <label>FGA</label>
    </interactant>
    <organismsDiffer>false</organismsDiffer>
    <experiments>3</experiments>
</comment>
<comment type="interaction">
    <interactant intactId="EBI-721293">
        <id>Q9BTV4</id>
    </interactant>
    <interactant intactId="EBI-724839">
        <id>Q14318</id>
        <label>FKBP8</label>
    </interactant>
    <organismsDiffer>false</organismsDiffer>
    <experiments>3</experiments>
</comment>
<comment type="interaction">
    <interactant intactId="EBI-721293">
        <id>Q9BTV4</id>
    </interactant>
    <interactant intactId="EBI-2832937">
        <id>Q96HH9</id>
        <label>GRAMD2B</label>
    </interactant>
    <organismsDiffer>false</organismsDiffer>
    <experiments>6</experiments>
</comment>
<comment type="interaction">
    <interactant intactId="EBI-721293">
        <id>Q9BTV4</id>
    </interactant>
    <interactant intactId="EBI-466029">
        <id>P42858</id>
        <label>HTT</label>
    </interactant>
    <organismsDiffer>false</organismsDiffer>
    <experiments>3</experiments>
</comment>
<comment type="interaction">
    <interactant intactId="EBI-721293">
        <id>Q9BTV4</id>
    </interactant>
    <interactant intactId="EBI-12280028">
        <id>Q9Y5K3-3</id>
        <label>PCYT1B</label>
    </interactant>
    <organismsDiffer>false</organismsDiffer>
    <experiments>3</experiments>
</comment>
<comment type="interaction">
    <interactant intactId="EBI-721293">
        <id>Q9BTV4</id>
    </interactant>
    <interactant intactId="EBI-7797649">
        <id>P11684</id>
        <label>SCGB1A1</label>
    </interactant>
    <organismsDiffer>false</organismsDiffer>
    <experiments>3</experiments>
</comment>
<comment type="interaction">
    <interactant intactId="EBI-721293">
        <id>Q9BTV4</id>
    </interactant>
    <interactant intactId="EBI-747107">
        <id>Q8IUQ4</id>
        <label>SIAH1</label>
    </interactant>
    <organismsDiffer>false</organismsDiffer>
    <experiments>3</experiments>
</comment>
<comment type="interaction">
    <interactant intactId="EBI-721293">
        <id>Q9BTV4</id>
    </interactant>
    <interactant intactId="EBI-11522811">
        <id>Q8IUQ4-2</id>
        <label>SIAH1</label>
    </interactant>
    <organismsDiffer>false</organismsDiffer>
    <experiments>3</experiments>
</comment>
<comment type="interaction">
    <interactant intactId="EBI-721293">
        <id>Q9BTV4</id>
    </interactant>
    <interactant intactId="EBI-726331">
        <id>Q9H7V2</id>
        <label>SYNDIG1</label>
    </interactant>
    <organismsDiffer>false</organismsDiffer>
    <experiments>3</experiments>
</comment>
<comment type="interaction">
    <interactant intactId="EBI-721293">
        <id>Q9BTV4</id>
    </interactant>
    <interactant intactId="EBI-721293">
        <id>Q9BTV4</id>
        <label>TMEM43</label>
    </interactant>
    <organismsDiffer>false</organismsDiffer>
    <experiments>4</experiments>
</comment>
<comment type="interaction">
    <interactant intactId="EBI-721293">
        <id>Q9BTV4</id>
    </interactant>
    <interactant intactId="EBI-2513462">
        <id>Q9UHP3</id>
        <label>USP25</label>
    </interactant>
    <organismsDiffer>false</organismsDiffer>
    <experiments>3</experiments>
</comment>
<comment type="interaction">
    <interactant intactId="EBI-721293">
        <id>Q9BTV4</id>
    </interactant>
    <interactant intactId="EBI-748373">
        <id>Q6PEW1</id>
        <label>ZCCHC12</label>
    </interactant>
    <organismsDiffer>false</organismsDiffer>
    <experiments>3</experiments>
</comment>
<comment type="subcellular location">
    <subcellularLocation>
        <location evidence="12">Endoplasmic reticulum membrane</location>
    </subcellularLocation>
    <subcellularLocation>
        <location>Nucleus inner membrane</location>
        <topology>Multi-pass membrane protein</topology>
    </subcellularLocation>
    <subcellularLocation>
        <location evidence="13">Cell membrane</location>
    </subcellularLocation>
    <text evidence="1">Retained in the inner nuclear membrane through interaction with EMD and A- and B-lamins. The N- and C-termini are oriented towards the nucleoplasm. The majority of the hydrophilic domain resides in the endoplasmic reticulum lumen (By similarity).</text>
</comment>
<comment type="tissue specificity">
    <text evidence="7">Highest expression in placenta. Also found at lower levels in heart, ovary, spleen, small intestine, thymus, prostate and testis.</text>
</comment>
<comment type="disease" evidence="8">
    <disease id="DI-01551">
        <name>Arrhythmogenic right ventricular dysplasia, familial, 5</name>
        <acronym>ARVD5</acronym>
        <description>A congenital heart disease characterized by infiltration of adipose and fibrous tissue into the right ventricle and loss of myocardial cells, resulting in ventricular and supraventricular arrhythmias.</description>
        <dbReference type="MIM" id="604400"/>
    </disease>
    <text>The disease is caused by variants affecting the gene represented in this entry.</text>
</comment>
<comment type="disease" evidence="9">
    <disease id="DI-03705">
        <name>Emery-Dreifuss muscular dystrophy 7, autosomal dominant</name>
        <acronym>EDMD7</acronym>
        <description>A form of Emery-Dreifuss muscular dystrophy, a degenerative myopathy characterized by weakness and atrophy of muscle without involvement of the nervous system, early contractures of the elbows, Achilles tendons and spine, and cardiomyopathy associated with cardiac conduction defects.</description>
        <dbReference type="MIM" id="614302"/>
    </disease>
    <text>The disease is caused by variants affecting the gene represented in this entry.</text>
</comment>
<comment type="disease" evidence="13">
    <disease id="DI-06395">
        <name>Auditory neuropathy, autosomal dominant 3</name>
        <acronym>AUNA3</acronym>
        <description>A form of sensorineural hearing loss with absent or severely abnormal auditory brainstem response, in the presence of normal cochlear outer hair cell function and normal otoacoustic emissions. Auditory neuropathies result from a lesion in the area including the inner hair cells, connections between the inner hair cells and the cochlear branch of the auditory nerve, the auditory nerve itself and auditory pathways of the brainstem. Affected individuals typically respond to sound but have difficulties in speech discrimination. AUNA3 is a late-onset, progressive form.</description>
        <dbReference type="MIM" id="619832"/>
    </disease>
    <text>The disease is caused by variants affecting the gene represented in this entry.</text>
</comment>
<comment type="similarity">
    <text evidence="14">Belongs to the TMEM43 family.</text>
</comment>
<comment type="sequence caution" evidence="14">
    <conflict type="erroneous initiation">
        <sequence resource="EMBL-CDS" id="BAB55396"/>
    </conflict>
    <text>Truncated N-terminus.</text>
</comment>
<organism>
    <name type="scientific">Homo sapiens</name>
    <name type="common">Human</name>
    <dbReference type="NCBI Taxonomy" id="9606"/>
    <lineage>
        <taxon>Eukaryota</taxon>
        <taxon>Metazoa</taxon>
        <taxon>Chordata</taxon>
        <taxon>Craniata</taxon>
        <taxon>Vertebrata</taxon>
        <taxon>Euteleostomi</taxon>
        <taxon>Mammalia</taxon>
        <taxon>Eutheria</taxon>
        <taxon>Euarchontoglires</taxon>
        <taxon>Primates</taxon>
        <taxon>Haplorrhini</taxon>
        <taxon>Catarrhini</taxon>
        <taxon>Hominidae</taxon>
        <taxon>Homo</taxon>
    </lineage>
</organism>
<sequence>MAANYSSTSTRREHVKVKTSSQPGFLERLSETSGGMFVGLMAFLLSFYLIFTNEGRALKTATSLAEGLSLVVSPDSIHSVAPENEGRLVHIIGALRTSKLLSDPNYGVHLPAVKLRRHVEMYQWVETEESREYTEDGQVKKETRYSYNTEWRSEIINSKNFDREIGHKNPSAMAVESFMATAPFVQIGRFFLSSGLIDKVDNFKSLSLSKLEDPHVDIIRRGDFFYHSENPKYPEVGDLRVSFSYAGLSGDDPDLGPAHVVTVIARQRGDQLVPFSTKSGDTLLLLHHGDFSAEEVFHRELRSNSMKTWGLRAAGWMAMFMGLNLMTRILYTLVDWFPVFRDLVNIGLKAFAFCVATSLTLLTVAAGWLFYRPLWALLIAGLALVPILVARTRVPAKKLE</sequence>
<keyword id="KW-0007">Acetylation</keyword>
<keyword id="KW-0122">Cardiomyopathy</keyword>
<keyword id="KW-1003">Cell membrane</keyword>
<keyword id="KW-0209">Deafness</keyword>
<keyword id="KW-0225">Disease variant</keyword>
<keyword id="KW-1067">Emery-Dreifuss muscular dystrophy</keyword>
<keyword id="KW-0256">Endoplasmic reticulum</keyword>
<keyword id="KW-0391">Immunity</keyword>
<keyword id="KW-0399">Innate immunity</keyword>
<keyword id="KW-0472">Membrane</keyword>
<keyword id="KW-0622">Neuropathy</keyword>
<keyword id="KW-1010">Non-syndromic deafness</keyword>
<keyword id="KW-0539">Nucleus</keyword>
<keyword id="KW-1267">Proteomics identification</keyword>
<keyword id="KW-1185">Reference proteome</keyword>
<keyword id="KW-0812">Transmembrane</keyword>
<keyword id="KW-1133">Transmembrane helix</keyword>
<evidence type="ECO:0000250" key="1"/>
<evidence type="ECO:0000250" key="2">
    <source>
        <dbReference type="UniProtKB" id="Q9DBS1"/>
    </source>
</evidence>
<evidence type="ECO:0000255" key="3"/>
<evidence type="ECO:0000269" key="4">
    <source>
    </source>
</evidence>
<evidence type="ECO:0000269" key="5">
    <source>
    </source>
</evidence>
<evidence type="ECO:0000269" key="6">
    <source>
    </source>
</evidence>
<evidence type="ECO:0000269" key="7">
    <source>
    </source>
</evidence>
<evidence type="ECO:0000269" key="8">
    <source>
    </source>
</evidence>
<evidence type="ECO:0000269" key="9">
    <source>
    </source>
</evidence>
<evidence type="ECO:0000269" key="10">
    <source>
    </source>
</evidence>
<evidence type="ECO:0000269" key="11">
    <source>
    </source>
</evidence>
<evidence type="ECO:0000269" key="12">
    <source>
    </source>
</evidence>
<evidence type="ECO:0000269" key="13">
    <source>
    </source>
</evidence>
<evidence type="ECO:0000305" key="14"/>
<evidence type="ECO:0007744" key="15">
    <source>
    </source>
</evidence>
<dbReference type="EMBL" id="AL136916">
    <property type="protein sequence ID" value="CAB66850.1"/>
    <property type="molecule type" value="mRNA"/>
</dbReference>
<dbReference type="EMBL" id="AY358625">
    <property type="protein sequence ID" value="AAQ88988.1"/>
    <property type="molecule type" value="mRNA"/>
</dbReference>
<dbReference type="EMBL" id="AK027466">
    <property type="protein sequence ID" value="BAB55131.1"/>
    <property type="molecule type" value="mRNA"/>
</dbReference>
<dbReference type="EMBL" id="AK027757">
    <property type="protein sequence ID" value="BAB55348.1"/>
    <property type="molecule type" value="mRNA"/>
</dbReference>
<dbReference type="EMBL" id="AK027827">
    <property type="protein sequence ID" value="BAB55396.1"/>
    <property type="status" value="ALT_INIT"/>
    <property type="molecule type" value="mRNA"/>
</dbReference>
<dbReference type="EMBL" id="AK027877">
    <property type="protein sequence ID" value="BAB55425.1"/>
    <property type="molecule type" value="mRNA"/>
</dbReference>
<dbReference type="EMBL" id="AK075010">
    <property type="protein sequence ID" value="BAC11350.1"/>
    <property type="molecule type" value="mRNA"/>
</dbReference>
<dbReference type="EMBL" id="BC003125">
    <property type="protein sequence ID" value="AAH03125.1"/>
    <property type="molecule type" value="mRNA"/>
</dbReference>
<dbReference type="EMBL" id="BC008054">
    <property type="protein sequence ID" value="AAH08054.2"/>
    <property type="molecule type" value="mRNA"/>
</dbReference>
<dbReference type="EMBL" id="BC011719">
    <property type="protein sequence ID" value="AAH11719.1"/>
    <property type="molecule type" value="mRNA"/>
</dbReference>
<dbReference type="CCDS" id="CCDS2618.1"/>
<dbReference type="RefSeq" id="NP_077310.1">
    <property type="nucleotide sequence ID" value="NM_024334.3"/>
</dbReference>
<dbReference type="BioGRID" id="122601">
    <property type="interactions" value="226"/>
</dbReference>
<dbReference type="FunCoup" id="Q9BTV4">
    <property type="interactions" value="1165"/>
</dbReference>
<dbReference type="IntAct" id="Q9BTV4">
    <property type="interactions" value="109"/>
</dbReference>
<dbReference type="MINT" id="Q9BTV4"/>
<dbReference type="STRING" id="9606.ENSP00000303992"/>
<dbReference type="GlyGen" id="Q9BTV4">
    <property type="glycosylation" value="2 sites, 1 N-linked glycan (1 site), 1 O-linked glycan (1 site)"/>
</dbReference>
<dbReference type="iPTMnet" id="Q9BTV4"/>
<dbReference type="PhosphoSitePlus" id="Q9BTV4"/>
<dbReference type="SwissPalm" id="Q9BTV4"/>
<dbReference type="BioMuta" id="TMEM43"/>
<dbReference type="DMDM" id="74733151"/>
<dbReference type="CPTAC" id="CPTAC-1646"/>
<dbReference type="jPOST" id="Q9BTV4"/>
<dbReference type="MassIVE" id="Q9BTV4"/>
<dbReference type="PaxDb" id="9606-ENSP00000303992"/>
<dbReference type="PeptideAtlas" id="Q9BTV4"/>
<dbReference type="ProteomicsDB" id="79012"/>
<dbReference type="Pumba" id="Q9BTV4"/>
<dbReference type="TopDownProteomics" id="Q9BTV4"/>
<dbReference type="Antibodypedia" id="10951">
    <property type="antibodies" value="127 antibodies from 23 providers"/>
</dbReference>
<dbReference type="DNASU" id="79188"/>
<dbReference type="Ensembl" id="ENST00000306077.5">
    <property type="protein sequence ID" value="ENSP00000303992.5"/>
    <property type="gene ID" value="ENSG00000170876.9"/>
</dbReference>
<dbReference type="GeneID" id="79188"/>
<dbReference type="KEGG" id="hsa:79188"/>
<dbReference type="MANE-Select" id="ENST00000306077.5">
    <property type="protein sequence ID" value="ENSP00000303992.5"/>
    <property type="RefSeq nucleotide sequence ID" value="NM_024334.3"/>
    <property type="RefSeq protein sequence ID" value="NP_077310.1"/>
</dbReference>
<dbReference type="UCSC" id="uc003byk.3">
    <property type="organism name" value="human"/>
</dbReference>
<dbReference type="AGR" id="HGNC:28472"/>
<dbReference type="CTD" id="79188"/>
<dbReference type="DisGeNET" id="79188"/>
<dbReference type="GeneCards" id="TMEM43"/>
<dbReference type="GeneReviews" id="TMEM43"/>
<dbReference type="HGNC" id="HGNC:28472">
    <property type="gene designation" value="TMEM43"/>
</dbReference>
<dbReference type="HPA" id="ENSG00000170876">
    <property type="expression patterns" value="Low tissue specificity"/>
</dbReference>
<dbReference type="MalaCards" id="TMEM43"/>
<dbReference type="MIM" id="604400">
    <property type="type" value="phenotype"/>
</dbReference>
<dbReference type="MIM" id="612048">
    <property type="type" value="gene"/>
</dbReference>
<dbReference type="MIM" id="614302">
    <property type="type" value="phenotype"/>
</dbReference>
<dbReference type="MIM" id="619832">
    <property type="type" value="phenotype"/>
</dbReference>
<dbReference type="neXtProt" id="NX_Q9BTV4"/>
<dbReference type="OpenTargets" id="ENSG00000170876"/>
<dbReference type="Orphanet" id="98853">
    <property type="disease" value="Autosomal dominant Emery-Dreifuss muscular dystrophy"/>
</dbReference>
<dbReference type="Orphanet" id="293888">
    <property type="disease" value="Inherited isolated arrhythmogenic cardiomyopathy, dominant-left variant"/>
</dbReference>
<dbReference type="Orphanet" id="293910">
    <property type="disease" value="Inherited isolated arrhythmogenic cardiomyopathy, dominant-right variant"/>
</dbReference>
<dbReference type="Orphanet" id="293899">
    <property type="disease" value="Inherited isolated arrhythmogenic ventricular dysplasia, biventricular variant"/>
</dbReference>
<dbReference type="PharmGKB" id="PA134871907"/>
<dbReference type="VEuPathDB" id="HostDB:ENSG00000170876"/>
<dbReference type="eggNOG" id="ENOG502QSR2">
    <property type="taxonomic scope" value="Eukaryota"/>
</dbReference>
<dbReference type="GeneTree" id="ENSGT00390000009671"/>
<dbReference type="HOGENOM" id="CLU_042602_1_0_1"/>
<dbReference type="InParanoid" id="Q9BTV4"/>
<dbReference type="OMA" id="NMMALDE"/>
<dbReference type="OrthoDB" id="410725at2759"/>
<dbReference type="PAN-GO" id="Q9BTV4">
    <property type="GO annotations" value="2 GO annotations based on evolutionary models"/>
</dbReference>
<dbReference type="PhylomeDB" id="Q9BTV4"/>
<dbReference type="TreeFam" id="TF324718"/>
<dbReference type="PathwayCommons" id="Q9BTV4"/>
<dbReference type="SignaLink" id="Q9BTV4"/>
<dbReference type="BioGRID-ORCS" id="79188">
    <property type="hits" value="6 hits in 1153 CRISPR screens"/>
</dbReference>
<dbReference type="ChiTaRS" id="TMEM43">
    <property type="organism name" value="human"/>
</dbReference>
<dbReference type="GeneWiki" id="TMEM43"/>
<dbReference type="GenomeRNAi" id="79188"/>
<dbReference type="Pharos" id="Q9BTV4">
    <property type="development level" value="Tbio"/>
</dbReference>
<dbReference type="PRO" id="PR:Q9BTV4"/>
<dbReference type="Proteomes" id="UP000005640">
    <property type="component" value="Chromosome 3"/>
</dbReference>
<dbReference type="RNAct" id="Q9BTV4">
    <property type="molecule type" value="protein"/>
</dbReference>
<dbReference type="Bgee" id="ENSG00000170876">
    <property type="expression patterns" value="Expressed in descending thoracic aorta and 196 other cell types or tissues"/>
</dbReference>
<dbReference type="ExpressionAtlas" id="Q9BTV4">
    <property type="expression patterns" value="baseline and differential"/>
</dbReference>
<dbReference type="GO" id="GO:0005788">
    <property type="term" value="C:endoplasmic reticulum lumen"/>
    <property type="evidence" value="ECO:0007669"/>
    <property type="project" value="Ensembl"/>
</dbReference>
<dbReference type="GO" id="GO:0005789">
    <property type="term" value="C:endoplasmic reticulum membrane"/>
    <property type="evidence" value="ECO:0007669"/>
    <property type="project" value="UniProtKB-SubCell"/>
</dbReference>
<dbReference type="GO" id="GO:0005794">
    <property type="term" value="C:Golgi apparatus"/>
    <property type="evidence" value="ECO:0000314"/>
    <property type="project" value="LIFEdb"/>
</dbReference>
<dbReference type="GO" id="GO:0005637">
    <property type="term" value="C:nuclear inner membrane"/>
    <property type="evidence" value="ECO:0000318"/>
    <property type="project" value="GO_Central"/>
</dbReference>
<dbReference type="GO" id="GO:0005886">
    <property type="term" value="C:plasma membrane"/>
    <property type="evidence" value="ECO:0007669"/>
    <property type="project" value="UniProtKB-SubCell"/>
</dbReference>
<dbReference type="GO" id="GO:0042802">
    <property type="term" value="F:identical protein binding"/>
    <property type="evidence" value="ECO:0000353"/>
    <property type="project" value="IntAct"/>
</dbReference>
<dbReference type="GO" id="GO:0045087">
    <property type="term" value="P:innate immune response"/>
    <property type="evidence" value="ECO:0007669"/>
    <property type="project" value="UniProtKB-KW"/>
</dbReference>
<dbReference type="GO" id="GO:0006629">
    <property type="term" value="P:lipid metabolic process"/>
    <property type="evidence" value="ECO:0000318"/>
    <property type="project" value="GO_Central"/>
</dbReference>
<dbReference type="GO" id="GO:0071763">
    <property type="term" value="P:nuclear membrane organization"/>
    <property type="evidence" value="ECO:0000314"/>
    <property type="project" value="MGI"/>
</dbReference>
<dbReference type="InterPro" id="IPR012430">
    <property type="entry name" value="TMEM43_fam"/>
</dbReference>
<dbReference type="PANTHER" id="PTHR13416">
    <property type="match status" value="1"/>
</dbReference>
<dbReference type="PANTHER" id="PTHR13416:SF2">
    <property type="entry name" value="TRANSMEMBRANE PROTEIN 43"/>
    <property type="match status" value="1"/>
</dbReference>
<dbReference type="Pfam" id="PF07787">
    <property type="entry name" value="TMEM43"/>
    <property type="match status" value="1"/>
</dbReference>
<accession>Q9BTV4</accession>
<accession>Q7L4N5</accession>
<accession>Q8NC30</accession>
<accession>Q96A63</accession>
<accession>Q96F19</accession>
<accession>Q96JX0</accession>
<accession>Q9H076</accession>
<proteinExistence type="evidence at protein level"/>
<reference key="1">
    <citation type="journal article" date="2001" name="Genome Res.">
        <title>Towards a catalog of human genes and proteins: sequencing and analysis of 500 novel complete protein coding human cDNAs.</title>
        <authorList>
            <person name="Wiemann S."/>
            <person name="Weil B."/>
            <person name="Wellenreuther R."/>
            <person name="Gassenhuber J."/>
            <person name="Glassl S."/>
            <person name="Ansorge W."/>
            <person name="Boecher M."/>
            <person name="Bloecker H."/>
            <person name="Bauersachs S."/>
            <person name="Blum H."/>
            <person name="Lauber J."/>
            <person name="Duesterhoeft A."/>
            <person name="Beyer A."/>
            <person name="Koehrer K."/>
            <person name="Strack N."/>
            <person name="Mewes H.-W."/>
            <person name="Ottenwaelder B."/>
            <person name="Obermaier B."/>
            <person name="Tampe J."/>
            <person name="Heubner D."/>
            <person name="Wambutt R."/>
            <person name="Korn B."/>
            <person name="Klein M."/>
            <person name="Poustka A."/>
        </authorList>
    </citation>
    <scope>NUCLEOTIDE SEQUENCE [LARGE SCALE MRNA]</scope>
    <scope>VARIANTS ASN-168 AND THR-179</scope>
    <source>
        <tissue>Uterus</tissue>
    </source>
</reference>
<reference key="2">
    <citation type="journal article" date="2003" name="Genome Res.">
        <title>The secreted protein discovery initiative (SPDI), a large-scale effort to identify novel human secreted and transmembrane proteins: a bioinformatics assessment.</title>
        <authorList>
            <person name="Clark H.F."/>
            <person name="Gurney A.L."/>
            <person name="Abaya E."/>
            <person name="Baker K."/>
            <person name="Baldwin D.T."/>
            <person name="Brush J."/>
            <person name="Chen J."/>
            <person name="Chow B."/>
            <person name="Chui C."/>
            <person name="Crowley C."/>
            <person name="Currell B."/>
            <person name="Deuel B."/>
            <person name="Dowd P."/>
            <person name="Eaton D."/>
            <person name="Foster J.S."/>
            <person name="Grimaldi C."/>
            <person name="Gu Q."/>
            <person name="Hass P.E."/>
            <person name="Heldens S."/>
            <person name="Huang A."/>
            <person name="Kim H.S."/>
            <person name="Klimowski L."/>
            <person name="Jin Y."/>
            <person name="Johnson S."/>
            <person name="Lee J."/>
            <person name="Lewis L."/>
            <person name="Liao D."/>
            <person name="Mark M.R."/>
            <person name="Robbie E."/>
            <person name="Sanchez C."/>
            <person name="Schoenfeld J."/>
            <person name="Seshagiri S."/>
            <person name="Simmons L."/>
            <person name="Singh J."/>
            <person name="Smith V."/>
            <person name="Stinson J."/>
            <person name="Vagts A."/>
            <person name="Vandlen R.L."/>
            <person name="Watanabe C."/>
            <person name="Wieand D."/>
            <person name="Woods K."/>
            <person name="Xie M.-H."/>
            <person name="Yansura D.G."/>
            <person name="Yi S."/>
            <person name="Yu G."/>
            <person name="Yuan J."/>
            <person name="Zhang M."/>
            <person name="Zhang Z."/>
            <person name="Goddard A.D."/>
            <person name="Wood W.I."/>
            <person name="Godowski P.J."/>
            <person name="Gray A.M."/>
        </authorList>
    </citation>
    <scope>NUCLEOTIDE SEQUENCE [LARGE SCALE MRNA]</scope>
</reference>
<reference key="3">
    <citation type="journal article" date="2004" name="Nat. Genet.">
        <title>Complete sequencing and characterization of 21,243 full-length human cDNAs.</title>
        <authorList>
            <person name="Ota T."/>
            <person name="Suzuki Y."/>
            <person name="Nishikawa T."/>
            <person name="Otsuki T."/>
            <person name="Sugiyama T."/>
            <person name="Irie R."/>
            <person name="Wakamatsu A."/>
            <person name="Hayashi K."/>
            <person name="Sato H."/>
            <person name="Nagai K."/>
            <person name="Kimura K."/>
            <person name="Makita H."/>
            <person name="Sekine M."/>
            <person name="Obayashi M."/>
            <person name="Nishi T."/>
            <person name="Shibahara T."/>
            <person name="Tanaka T."/>
            <person name="Ishii S."/>
            <person name="Yamamoto J."/>
            <person name="Saito K."/>
            <person name="Kawai Y."/>
            <person name="Isono Y."/>
            <person name="Nakamura Y."/>
            <person name="Nagahari K."/>
            <person name="Murakami K."/>
            <person name="Yasuda T."/>
            <person name="Iwayanagi T."/>
            <person name="Wagatsuma M."/>
            <person name="Shiratori A."/>
            <person name="Sudo H."/>
            <person name="Hosoiri T."/>
            <person name="Kaku Y."/>
            <person name="Kodaira H."/>
            <person name="Kondo H."/>
            <person name="Sugawara M."/>
            <person name="Takahashi M."/>
            <person name="Kanda K."/>
            <person name="Yokoi T."/>
            <person name="Furuya T."/>
            <person name="Kikkawa E."/>
            <person name="Omura Y."/>
            <person name="Abe K."/>
            <person name="Kamihara K."/>
            <person name="Katsuta N."/>
            <person name="Sato K."/>
            <person name="Tanikawa M."/>
            <person name="Yamazaki M."/>
            <person name="Ninomiya K."/>
            <person name="Ishibashi T."/>
            <person name="Yamashita H."/>
            <person name="Murakawa K."/>
            <person name="Fujimori K."/>
            <person name="Tanai H."/>
            <person name="Kimata M."/>
            <person name="Watanabe M."/>
            <person name="Hiraoka S."/>
            <person name="Chiba Y."/>
            <person name="Ishida S."/>
            <person name="Ono Y."/>
            <person name="Takiguchi S."/>
            <person name="Watanabe S."/>
            <person name="Yosida M."/>
            <person name="Hotuta T."/>
            <person name="Kusano J."/>
            <person name="Kanehori K."/>
            <person name="Takahashi-Fujii A."/>
            <person name="Hara H."/>
            <person name="Tanase T.-O."/>
            <person name="Nomura Y."/>
            <person name="Togiya S."/>
            <person name="Komai F."/>
            <person name="Hara R."/>
            <person name="Takeuchi K."/>
            <person name="Arita M."/>
            <person name="Imose N."/>
            <person name="Musashino K."/>
            <person name="Yuuki H."/>
            <person name="Oshima A."/>
            <person name="Sasaki N."/>
            <person name="Aotsuka S."/>
            <person name="Yoshikawa Y."/>
            <person name="Matsunawa H."/>
            <person name="Ichihara T."/>
            <person name="Shiohata N."/>
            <person name="Sano S."/>
            <person name="Moriya S."/>
            <person name="Momiyama H."/>
            <person name="Satoh N."/>
            <person name="Takami S."/>
            <person name="Terashima Y."/>
            <person name="Suzuki O."/>
            <person name="Nakagawa S."/>
            <person name="Senoh A."/>
            <person name="Mizoguchi H."/>
            <person name="Goto Y."/>
            <person name="Shimizu F."/>
            <person name="Wakebe H."/>
            <person name="Hishigaki H."/>
            <person name="Watanabe T."/>
            <person name="Sugiyama A."/>
            <person name="Takemoto M."/>
            <person name="Kawakami B."/>
            <person name="Yamazaki M."/>
            <person name="Watanabe K."/>
            <person name="Kumagai A."/>
            <person name="Itakura S."/>
            <person name="Fukuzumi Y."/>
            <person name="Fujimori Y."/>
            <person name="Komiyama M."/>
            <person name="Tashiro H."/>
            <person name="Tanigami A."/>
            <person name="Fujiwara T."/>
            <person name="Ono T."/>
            <person name="Yamada K."/>
            <person name="Fujii Y."/>
            <person name="Ozaki K."/>
            <person name="Hirao M."/>
            <person name="Ohmori Y."/>
            <person name="Kawabata A."/>
            <person name="Hikiji T."/>
            <person name="Kobatake N."/>
            <person name="Inagaki H."/>
            <person name="Ikema Y."/>
            <person name="Okamoto S."/>
            <person name="Okitani R."/>
            <person name="Kawakami T."/>
            <person name="Noguchi S."/>
            <person name="Itoh T."/>
            <person name="Shigeta K."/>
            <person name="Senba T."/>
            <person name="Matsumura K."/>
            <person name="Nakajima Y."/>
            <person name="Mizuno T."/>
            <person name="Morinaga M."/>
            <person name="Sasaki M."/>
            <person name="Togashi T."/>
            <person name="Oyama M."/>
            <person name="Hata H."/>
            <person name="Watanabe M."/>
            <person name="Komatsu T."/>
            <person name="Mizushima-Sugano J."/>
            <person name="Satoh T."/>
            <person name="Shirai Y."/>
            <person name="Takahashi Y."/>
            <person name="Nakagawa K."/>
            <person name="Okumura K."/>
            <person name="Nagase T."/>
            <person name="Nomura N."/>
            <person name="Kikuchi H."/>
            <person name="Masuho Y."/>
            <person name="Yamashita R."/>
            <person name="Nakai K."/>
            <person name="Yada T."/>
            <person name="Nakamura Y."/>
            <person name="Ohara O."/>
            <person name="Isogai T."/>
            <person name="Sugano S."/>
        </authorList>
    </citation>
    <scope>NUCLEOTIDE SEQUENCE [LARGE SCALE MRNA]</scope>
    <scope>VARIANTS ASN-168 AND THR-179</scope>
    <source>
        <tissue>Placenta</tissue>
        <tissue>Thyroid</tissue>
    </source>
</reference>
<reference key="4">
    <citation type="journal article" date="2005" name="DNA Res.">
        <title>Signal sequence and keyword trap in silico for selection of full-length human cDNAs encoding secretion or membrane proteins from oligo-capped cDNA libraries.</title>
        <authorList>
            <person name="Otsuki T."/>
            <person name="Ota T."/>
            <person name="Nishikawa T."/>
            <person name="Hayashi K."/>
            <person name="Suzuki Y."/>
            <person name="Yamamoto J."/>
            <person name="Wakamatsu A."/>
            <person name="Kimura K."/>
            <person name="Sakamoto K."/>
            <person name="Hatano N."/>
            <person name="Kawai Y."/>
            <person name="Ishii S."/>
            <person name="Saito K."/>
            <person name="Kojima S."/>
            <person name="Sugiyama T."/>
            <person name="Ono T."/>
            <person name="Okano K."/>
            <person name="Yoshikawa Y."/>
            <person name="Aotsuka S."/>
            <person name="Sasaki N."/>
            <person name="Hattori A."/>
            <person name="Okumura K."/>
            <person name="Nagai K."/>
            <person name="Sugano S."/>
            <person name="Isogai T."/>
        </authorList>
    </citation>
    <scope>NUCLEOTIDE SEQUENCE [LARGE SCALE MRNA]</scope>
</reference>
<reference key="5">
    <citation type="journal article" date="2004" name="Genome Res.">
        <title>The status, quality, and expansion of the NIH full-length cDNA project: the Mammalian Gene Collection (MGC).</title>
        <authorList>
            <consortium name="The MGC Project Team"/>
        </authorList>
    </citation>
    <scope>NUCLEOTIDE SEQUENCE [LARGE SCALE MRNA]</scope>
    <scope>VARIANTS ASN-168 AND THR-179</scope>
    <source>
        <tissue>Brain</tissue>
        <tissue>Ovary</tissue>
        <tissue>Uterus</tissue>
    </source>
</reference>
<reference key="6">
    <citation type="journal article" date="2008" name="J. Cell Sci.">
        <title>LUMA interacts with emerin and influences its distribution at the inner nuclear membrane.</title>
        <authorList>
            <person name="Bengtsson L."/>
            <person name="Otto H."/>
        </authorList>
    </citation>
    <scope>TISSUE SPECIFICITY</scope>
</reference>
<reference key="7">
    <citation type="journal article" date="2009" name="Anal. Chem.">
        <title>Lys-N and trypsin cover complementary parts of the phosphoproteome in a refined SCX-based approach.</title>
        <authorList>
            <person name="Gauci S."/>
            <person name="Helbig A.O."/>
            <person name="Slijper M."/>
            <person name="Krijgsveld J."/>
            <person name="Heck A.J."/>
            <person name="Mohammed S."/>
        </authorList>
    </citation>
    <scope>ACETYLATION [LARGE SCALE ANALYSIS] AT ALA-2</scope>
    <scope>CLEAVAGE OF INITIATOR METHIONINE [LARGE SCALE ANALYSIS]</scope>
    <scope>IDENTIFICATION BY MASS SPECTROMETRY [LARGE SCALE ANALYSIS]</scope>
</reference>
<reference key="8">
    <citation type="journal article" date="2011" name="Ann. Neurol.">
        <title>TMEM43 mutations in Emery-Dreifuss muscular dystrophy-related myopathy.</title>
        <authorList>
            <person name="Liang W.C."/>
            <person name="Mitsuhashi H."/>
            <person name="Keduka E."/>
            <person name="Nonaka I."/>
            <person name="Noguchi S."/>
            <person name="Nishino I."/>
            <person name="Hayashi Y.K."/>
        </authorList>
    </citation>
    <scope>INTERACTION WITH SUN2</scope>
    <scope>VARIANTS EDMD7 LYS-85 AND VAL-91</scope>
    <scope>CHARACTERIZATION OF VARIANTS EDMD7 LYS-85 AND VAL-91</scope>
</reference>
<reference key="9">
    <citation type="journal article" date="2011" name="BMC Syst. Biol.">
        <title>Initial characterization of the human central proteome.</title>
        <authorList>
            <person name="Burkard T.R."/>
            <person name="Planyavsky M."/>
            <person name="Kaupe I."/>
            <person name="Breitwieser F.P."/>
            <person name="Buerckstuemmer T."/>
            <person name="Bennett K.L."/>
            <person name="Superti-Furga G."/>
            <person name="Colinge J."/>
        </authorList>
    </citation>
    <scope>IDENTIFICATION BY MASS SPECTROMETRY [LARGE SCALE ANALYSIS]</scope>
</reference>
<reference key="10">
    <citation type="journal article" date="2012" name="Proc. Natl. Acad. Sci. U.S.A.">
        <title>N-terminal acetylome analyses and functional insights of the N-terminal acetyltransferase NatB.</title>
        <authorList>
            <person name="Van Damme P."/>
            <person name="Lasa M."/>
            <person name="Polevoda B."/>
            <person name="Gazquez C."/>
            <person name="Elosegui-Artola A."/>
            <person name="Kim D.S."/>
            <person name="De Juan-Pardo E."/>
            <person name="Demeyer K."/>
            <person name="Hole K."/>
            <person name="Larrea E."/>
            <person name="Timmerman E."/>
            <person name="Prieto J."/>
            <person name="Arnesen T."/>
            <person name="Sherman F."/>
            <person name="Gevaert K."/>
            <person name="Aldabe R."/>
        </authorList>
    </citation>
    <scope>IDENTIFICATION BY MASS SPECTROMETRY [LARGE SCALE ANALYSIS]</scope>
</reference>
<reference key="11">
    <citation type="journal article" date="2014" name="J. Proteomics">
        <title>An enzyme assisted RP-RPLC approach for in-depth analysis of human liver phosphoproteome.</title>
        <authorList>
            <person name="Bian Y."/>
            <person name="Song C."/>
            <person name="Cheng K."/>
            <person name="Dong M."/>
            <person name="Wang F."/>
            <person name="Huang J."/>
            <person name="Sun D."/>
            <person name="Wang L."/>
            <person name="Ye M."/>
            <person name="Zou H."/>
        </authorList>
    </citation>
    <scope>IDENTIFICATION BY MASS SPECTROMETRY [LARGE SCALE ANALYSIS]</scope>
    <source>
        <tissue>Liver</tissue>
    </source>
</reference>
<reference key="12">
    <citation type="journal article" date="2015" name="Proteomics">
        <title>N-terminome analysis of the human mitochondrial proteome.</title>
        <authorList>
            <person name="Vaca Jacome A.S."/>
            <person name="Rabilloud T."/>
            <person name="Schaeffer-Reiss C."/>
            <person name="Rompais M."/>
            <person name="Ayoub D."/>
            <person name="Lane L."/>
            <person name="Bairoch A."/>
            <person name="Van Dorsselaer A."/>
            <person name="Carapito C."/>
        </authorList>
    </citation>
    <scope>IDENTIFICATION BY MASS SPECTROMETRY [LARGE SCALE ANALYSIS]</scope>
</reference>
<reference key="13">
    <citation type="journal article" date="2017" name="Oncogene">
        <title>TMEM43/LUMA is a key signaling component mediating EGFR-induced NF-kappaB activation and tumor progression.</title>
        <authorList>
            <person name="Jiang C."/>
            <person name="Zhu Y."/>
            <person name="Zhou Z."/>
            <person name="Gumin J."/>
            <person name="Bengtsson L."/>
            <person name="Wu W."/>
            <person name="Songyang Z."/>
            <person name="Lang F.F."/>
            <person name="Lin X."/>
        </authorList>
    </citation>
    <scope>FUNCTION</scope>
    <scope>INTERACTION WITH CARD10</scope>
</reference>
<reference key="14">
    <citation type="journal article" date="2020" name="Elife">
        <title>Interaction mapping of endoplasmic reticulum ubiquitin ligases identifies modulators of innate immune signalling.</title>
        <authorList>
            <person name="Fenech E.J."/>
            <person name="Lari F."/>
            <person name="Charles P.D."/>
            <person name="Fischer R."/>
            <person name="Laetitia-Thezenas M."/>
            <person name="Bagola K."/>
            <person name="Paton A.W."/>
            <person name="Paton J.C."/>
            <person name="Gyrd-Hansen M."/>
            <person name="Kessler B.M."/>
            <person name="Christianson J.C."/>
        </authorList>
    </citation>
    <scope>FUNCTION</scope>
    <scope>INTERACTION WITH RNF26</scope>
    <scope>SUBCELLULAR LOCATION</scope>
</reference>
<reference key="15">
    <citation type="journal article" date="2008" name="Am. J. Hum. Genet.">
        <title>Arrhythmogenic right ventricular cardiomyopathy type 5 is a fully penetrant, lethal arrhythmic disorder caused by a missense mutation in the TMEM43 gene.</title>
        <authorList>
            <person name="Merner N.D."/>
            <person name="Hodgkinson K.A."/>
            <person name="Haywood A.F.M."/>
            <person name="Connors S."/>
            <person name="French V.M."/>
            <person name="Drenckhahn J.-D."/>
            <person name="Kupprion C."/>
            <person name="Ramadanova K."/>
            <person name="Thierfelder L."/>
            <person name="McKenna W."/>
            <person name="Gallagher B."/>
            <person name="Morris-Larkin L."/>
            <person name="Bassett A.S."/>
            <person name="Parfrey P.S."/>
            <person name="Young T.-L."/>
        </authorList>
    </citation>
    <scope>VARIANT ARVD5 LEU-358</scope>
</reference>
<reference key="16">
    <citation type="journal article" date="2015" name="Cell Rep.">
        <title>An organellar nalpha-acetyltransferase, naa60, acetylates cytosolic N termini of transmembrane proteins and maintains Golgi integrity.</title>
        <authorList>
            <person name="Aksnes H."/>
            <person name="Van Damme P."/>
            <person name="Goris M."/>
            <person name="Starheim K.K."/>
            <person name="Marie M."/>
            <person name="Stoeve S.I."/>
            <person name="Hoel C."/>
            <person name="Kalvik T.V."/>
            <person name="Hole K."/>
            <person name="Glomnes N."/>
            <person name="Furnes C."/>
            <person name="Ljostveit S."/>
            <person name="Ziegler M."/>
            <person name="Niere M."/>
            <person name="Gevaert K."/>
            <person name="Arnesen T."/>
        </authorList>
    </citation>
    <scope>ACETYLATION AT ALA-2</scope>
</reference>
<reference key="17">
    <citation type="journal article" date="2021" name="Proc. Natl. Acad. Sci. U.S.A.">
        <title>A nonsense TMEM43 variant leads to disruption of connexin-linked function and autosomal dominant auditory neuropathy spectrum disorder.</title>
        <authorList>
            <person name="Jang M.W."/>
            <person name="Oh D.Y."/>
            <person name="Yi E."/>
            <person name="Liu X."/>
            <person name="Ling J."/>
            <person name="Kim N."/>
            <person name="Sharma K."/>
            <person name="Kim T.Y."/>
            <person name="Lee S."/>
            <person name="Kim A.R."/>
            <person name="Kim M.Y."/>
            <person name="Kim M.A."/>
            <person name="Lee M."/>
            <person name="Han J.H."/>
            <person name="Han J.J."/>
            <person name="Park H.R."/>
            <person name="Kim B.J."/>
            <person name="Lee S.Y."/>
            <person name="Woo D.H."/>
            <person name="Oh J."/>
            <person name="Oh S.J."/>
            <person name="Du T."/>
            <person name="Koo J.W."/>
            <person name="Oh S.H."/>
            <person name="Shin H.W."/>
            <person name="Seong M.W."/>
            <person name="Lee K.Y."/>
            <person name="Kim U.K."/>
            <person name="Shin J.B."/>
            <person name="Sang S."/>
            <person name="Cai X."/>
            <person name="Mei L."/>
            <person name="He C."/>
            <person name="Blanton S.H."/>
            <person name="Chen Z.Y."/>
            <person name="Chen H."/>
            <person name="Liu X."/>
            <person name="Nourbakhsh A."/>
            <person name="Huang Z."/>
            <person name="Kang K.W."/>
            <person name="Park W.Y."/>
            <person name="Feng Y."/>
            <person name="Lee C.J."/>
            <person name="Choi B.Y."/>
        </authorList>
    </citation>
    <scope>INVOLVEMENT IN AUNA3</scope>
    <scope>VARIANT AUNA3 372-ARG--GLU-400 DEL</scope>
    <scope>CHARACTERIZATION OF VARIANT AUNA3 372-ARG--GLU-400 DEL</scope>
    <scope>FUNCTION</scope>
    <scope>SUBCELLULAR LOCATION</scope>
    <scope>INTERACTION WITH GJB2 AND GJB4</scope>
</reference>
<feature type="initiator methionine" description="Removed" evidence="15">
    <location>
        <position position="1"/>
    </location>
</feature>
<feature type="chain" id="PRO_0000284498" description="Transmembrane protein 43">
    <location>
        <begin position="2"/>
        <end position="400"/>
    </location>
</feature>
<feature type="topological domain" description="Nuclear" evidence="3">
    <location>
        <begin position="2"/>
        <end position="31"/>
    </location>
</feature>
<feature type="transmembrane region" description="Helical" evidence="3">
    <location>
        <begin position="32"/>
        <end position="52"/>
    </location>
</feature>
<feature type="topological domain" description="Perinuclear space" evidence="3">
    <location>
        <begin position="53"/>
        <end position="313"/>
    </location>
</feature>
<feature type="transmembrane region" description="Helical" evidence="3">
    <location>
        <begin position="314"/>
        <end position="334"/>
    </location>
</feature>
<feature type="topological domain" description="Nuclear" evidence="3">
    <location>
        <begin position="335"/>
        <end position="345"/>
    </location>
</feature>
<feature type="transmembrane region" description="Helical" evidence="3">
    <location>
        <begin position="346"/>
        <end position="366"/>
    </location>
</feature>
<feature type="topological domain" description="Perinuclear space" evidence="3">
    <location>
        <begin position="367"/>
        <end position="368"/>
    </location>
</feature>
<feature type="transmembrane region" description="Helical" evidence="3">
    <location>
        <begin position="369"/>
        <end position="389"/>
    </location>
</feature>
<feature type="topological domain" description="Nuclear" evidence="3">
    <location>
        <begin position="390"/>
        <end position="400"/>
    </location>
</feature>
<feature type="modified residue" description="N-acetylalanine" evidence="10 15">
    <location>
        <position position="2"/>
    </location>
</feature>
<feature type="sequence variant" id="VAR_069794" description="In EDMD7; the mutant protein forms predominantly monomers with very few dimers indicating a defect in oligomerization; overexpression in HeLa cells results in abnormal nuclear structures and decreased nuclear localization of both EMD and SUN2 with mislocalization of EMD to the endoplasmic reticulum; dbSNP:rs397514044." evidence="9">
    <original>E</original>
    <variation>K</variation>
    <location>
        <position position="85"/>
    </location>
</feature>
<feature type="sequence variant" id="VAR_069795" description="In EDMD7; the mutant protein is able to form oligomers; overexpression in HeLa cells results in abnormal nuclear structures and decreased nuclear localization of both EMD and SUN2 with mislocalization of EMD to the endoplasmic reticulum; dbSNP:rs144811578." evidence="9">
    <original>I</original>
    <variation>V</variation>
    <location>
        <position position="91"/>
    </location>
</feature>
<feature type="sequence variant" id="VAR_031751" description="In dbSNP:rs4685076." evidence="4 5 6">
    <original>K</original>
    <variation>N</variation>
    <location>
        <position position="168"/>
    </location>
</feature>
<feature type="sequence variant" id="VAR_031752" description="In dbSNP:rs2340917." evidence="4 5 6">
    <original>M</original>
    <variation>T</variation>
    <location>
        <position position="179"/>
    </location>
</feature>
<feature type="sequence variant" id="VAR_031753" description="In dbSNP:rs35924492.">
    <original>Y</original>
    <variation>C</variation>
    <location>
        <position position="233"/>
    </location>
</feature>
<feature type="sequence variant" id="VAR_031754" description="In dbSNP:rs11924644.">
    <original>A</original>
    <variation>V</variation>
    <location>
        <position position="318"/>
    </location>
</feature>
<feature type="sequence variant" id="VAR_044438" description="In ARVD5; dbSNP:rs63750743." evidence="8">
    <original>S</original>
    <variation>L</variation>
    <location>
        <position position="358"/>
    </location>
</feature>
<feature type="sequence variant" id="VAR_087154" description="In AUNA3; decreased protein stability; reduced passive conductance current in cochlear glia-like supporting cells; does not affect interactions with GJB2 and GJB4; dbSNP:rs773224617." evidence="13">
    <location>
        <begin position="372"/>
        <end position="400"/>
    </location>
</feature>
<feature type="sequence conflict" description="In Ref. 4; BAC11350." evidence="14" ref="4">
    <original>L</original>
    <variation>P</variation>
    <location>
        <position position="196"/>
    </location>
</feature>
<feature type="sequence conflict" description="In Ref. 5; AAH11719." evidence="14" ref="5">
    <original>P</original>
    <variation>L</variation>
    <location>
        <position position="338"/>
    </location>
</feature>
<gene>
    <name type="primary">TMEM43</name>
    <name type="ORF">UNQ2564/PRO6244</name>
</gene>
<protein>
    <recommendedName>
        <fullName>Transmembrane protein 43</fullName>
    </recommendedName>
    <alternativeName>
        <fullName>Protein LUMA</fullName>
    </alternativeName>
</protein>
<name>TMM43_HUMAN</name>